<reference key="1">
    <citation type="submission" date="2009-02" db="EMBL/GenBank/DDBJ databases">
        <title>Vibrio splendidus str. LGP32 complete genome.</title>
        <authorList>
            <person name="Mazel D."/>
            <person name="Le Roux F."/>
        </authorList>
    </citation>
    <scope>NUCLEOTIDE SEQUENCE [LARGE SCALE GENOMIC DNA]</scope>
    <source>
        <strain>LGP32</strain>
    </source>
</reference>
<feature type="chain" id="PRO_1000163957" description="Acetylornithine deacetylase">
    <location>
        <begin position="1"/>
        <end position="378"/>
    </location>
</feature>
<feature type="active site" evidence="1">
    <location>
        <position position="78"/>
    </location>
</feature>
<feature type="active site" evidence="1">
    <location>
        <position position="140"/>
    </location>
</feature>
<feature type="binding site" evidence="1">
    <location>
        <position position="76"/>
    </location>
    <ligand>
        <name>Zn(2+)</name>
        <dbReference type="ChEBI" id="CHEBI:29105"/>
        <label>1</label>
    </ligand>
</feature>
<feature type="binding site" evidence="1">
    <location>
        <position position="108"/>
    </location>
    <ligand>
        <name>Zn(2+)</name>
        <dbReference type="ChEBI" id="CHEBI:29105"/>
        <label>1</label>
    </ligand>
</feature>
<feature type="binding site" evidence="1">
    <location>
        <position position="108"/>
    </location>
    <ligand>
        <name>Zn(2+)</name>
        <dbReference type="ChEBI" id="CHEBI:29105"/>
        <label>2</label>
    </ligand>
</feature>
<feature type="binding site" evidence="1">
    <location>
        <position position="141"/>
    </location>
    <ligand>
        <name>Zn(2+)</name>
        <dbReference type="ChEBI" id="CHEBI:29105"/>
        <label>2</label>
    </ligand>
</feature>
<feature type="binding site" evidence="1">
    <location>
        <position position="165"/>
    </location>
    <ligand>
        <name>Zn(2+)</name>
        <dbReference type="ChEBI" id="CHEBI:29105"/>
        <label>1</label>
    </ligand>
</feature>
<feature type="binding site" evidence="1">
    <location>
        <position position="351"/>
    </location>
    <ligand>
        <name>Zn(2+)</name>
        <dbReference type="ChEBI" id="CHEBI:29105"/>
        <label>2</label>
    </ligand>
</feature>
<name>ARGE_VIBA3</name>
<evidence type="ECO:0000255" key="1">
    <source>
        <dbReference type="HAMAP-Rule" id="MF_01108"/>
    </source>
</evidence>
<sequence length="378" mass="41899">MQLPSFLEVYKGLISTDSISSTDPSWDHGNEKVIEKMAQWFKDVGFSVEVVEVEPGKHNMVAKMGSGEGGLLLAGHSDTVPFDEGRWNFDPHALTEHNNRFYGLGTADMKGFFAFVYEAAKKMDWSKQTKPLYVLATCDEETTMLGARHFTENAPFKPDYCIIGEPTSLVPIRGHKGHVANAVRVTGKSGHSSDPALGVNAIEIMHEVLFALMQLRDKLVKEYHHPGFAIPSPTLNLGHIHGGDSANRICGCCELHYDVRPLPGISLDGLDNMLRSALKEVEAKWPGRIEITPLHEPIPGYECQHDHPFIGGMESVCETESQTVNYCTEAPFLQELCPTLVLGPGSIDQAHQPDEFLSFDFIDPTIDVLSKSIRKYCF</sequence>
<keyword id="KW-0028">Amino-acid biosynthesis</keyword>
<keyword id="KW-0055">Arginine biosynthesis</keyword>
<keyword id="KW-0170">Cobalt</keyword>
<keyword id="KW-0963">Cytoplasm</keyword>
<keyword id="KW-0378">Hydrolase</keyword>
<keyword id="KW-0479">Metal-binding</keyword>
<keyword id="KW-0862">Zinc</keyword>
<comment type="function">
    <text evidence="1">Catalyzes the hydrolysis of the amide bond of N(2)-acetylated L-amino acids. Cleaves the acetyl group from N-acetyl-L-ornithine to form L-ornithine, an intermediate in L-arginine biosynthesis pathway, and a branchpoint in the synthesis of polyamines.</text>
</comment>
<comment type="catalytic activity">
    <reaction evidence="1">
        <text>N(2)-acetyl-L-ornithine + H2O = L-ornithine + acetate</text>
        <dbReference type="Rhea" id="RHEA:15941"/>
        <dbReference type="ChEBI" id="CHEBI:15377"/>
        <dbReference type="ChEBI" id="CHEBI:30089"/>
        <dbReference type="ChEBI" id="CHEBI:46911"/>
        <dbReference type="ChEBI" id="CHEBI:57805"/>
        <dbReference type="EC" id="3.5.1.16"/>
    </reaction>
</comment>
<comment type="cofactor">
    <cofactor evidence="1">
        <name>Zn(2+)</name>
        <dbReference type="ChEBI" id="CHEBI:29105"/>
    </cofactor>
    <cofactor evidence="1">
        <name>Co(2+)</name>
        <dbReference type="ChEBI" id="CHEBI:48828"/>
    </cofactor>
    <text evidence="1">Binds 2 Zn(2+) or Co(2+) ions per subunit.</text>
</comment>
<comment type="cofactor">
    <cofactor evidence="1">
        <name>glutathione</name>
        <dbReference type="ChEBI" id="CHEBI:57925"/>
    </cofactor>
</comment>
<comment type="pathway">
    <text evidence="1">Amino-acid biosynthesis; L-arginine biosynthesis; L-ornithine from N(2)-acetyl-L-ornithine (linear): step 1/1.</text>
</comment>
<comment type="subunit">
    <text evidence="1">Homodimer.</text>
</comment>
<comment type="subcellular location">
    <subcellularLocation>
        <location evidence="1">Cytoplasm</location>
    </subcellularLocation>
</comment>
<comment type="similarity">
    <text evidence="1">Belongs to the peptidase M20A family. ArgE subfamily.</text>
</comment>
<accession>B7VLL4</accession>
<dbReference type="EC" id="3.5.1.16" evidence="1"/>
<dbReference type="EMBL" id="FM954972">
    <property type="protein sequence ID" value="CAV20186.1"/>
    <property type="molecule type" value="Genomic_DNA"/>
</dbReference>
<dbReference type="SMR" id="B7VLL4"/>
<dbReference type="STRING" id="575788.VS_2889"/>
<dbReference type="KEGG" id="vsp:VS_2889"/>
<dbReference type="eggNOG" id="COG0624">
    <property type="taxonomic scope" value="Bacteria"/>
</dbReference>
<dbReference type="HOGENOM" id="CLU_021802_2_4_6"/>
<dbReference type="UniPathway" id="UPA00068">
    <property type="reaction ID" value="UER00110"/>
</dbReference>
<dbReference type="Proteomes" id="UP000009100">
    <property type="component" value="Chromosome 1"/>
</dbReference>
<dbReference type="GO" id="GO:0005737">
    <property type="term" value="C:cytoplasm"/>
    <property type="evidence" value="ECO:0007669"/>
    <property type="project" value="UniProtKB-SubCell"/>
</dbReference>
<dbReference type="GO" id="GO:0008777">
    <property type="term" value="F:acetylornithine deacetylase activity"/>
    <property type="evidence" value="ECO:0007669"/>
    <property type="project" value="UniProtKB-UniRule"/>
</dbReference>
<dbReference type="GO" id="GO:0008270">
    <property type="term" value="F:zinc ion binding"/>
    <property type="evidence" value="ECO:0007669"/>
    <property type="project" value="UniProtKB-UniRule"/>
</dbReference>
<dbReference type="GO" id="GO:0006526">
    <property type="term" value="P:L-arginine biosynthetic process"/>
    <property type="evidence" value="ECO:0007669"/>
    <property type="project" value="UniProtKB-UniRule"/>
</dbReference>
<dbReference type="CDD" id="cd03894">
    <property type="entry name" value="M20_ArgE"/>
    <property type="match status" value="1"/>
</dbReference>
<dbReference type="FunFam" id="3.30.70.360:FF:000003">
    <property type="entry name" value="Acetylornithine deacetylase"/>
    <property type="match status" value="1"/>
</dbReference>
<dbReference type="Gene3D" id="3.30.70.360">
    <property type="match status" value="1"/>
</dbReference>
<dbReference type="Gene3D" id="3.40.630.10">
    <property type="entry name" value="Zn peptidases"/>
    <property type="match status" value="1"/>
</dbReference>
<dbReference type="HAMAP" id="MF_01108">
    <property type="entry name" value="ArgE"/>
    <property type="match status" value="1"/>
</dbReference>
<dbReference type="InterPro" id="IPR010169">
    <property type="entry name" value="AcOrn-deacetyl"/>
</dbReference>
<dbReference type="InterPro" id="IPR001261">
    <property type="entry name" value="ArgE/DapE_CS"/>
</dbReference>
<dbReference type="InterPro" id="IPR036264">
    <property type="entry name" value="Bact_exopeptidase_dim_dom"/>
</dbReference>
<dbReference type="InterPro" id="IPR002933">
    <property type="entry name" value="Peptidase_M20"/>
</dbReference>
<dbReference type="InterPro" id="IPR011650">
    <property type="entry name" value="Peptidase_M20_dimer"/>
</dbReference>
<dbReference type="InterPro" id="IPR050072">
    <property type="entry name" value="Peptidase_M20A"/>
</dbReference>
<dbReference type="NCBIfam" id="TIGR01892">
    <property type="entry name" value="AcOrn-deacetyl"/>
    <property type="match status" value="1"/>
</dbReference>
<dbReference type="NCBIfam" id="NF003474">
    <property type="entry name" value="PRK05111.1"/>
    <property type="match status" value="1"/>
</dbReference>
<dbReference type="PANTHER" id="PTHR43808">
    <property type="entry name" value="ACETYLORNITHINE DEACETYLASE"/>
    <property type="match status" value="1"/>
</dbReference>
<dbReference type="PANTHER" id="PTHR43808:SF1">
    <property type="entry name" value="ACETYLORNITHINE DEACETYLASE"/>
    <property type="match status" value="1"/>
</dbReference>
<dbReference type="Pfam" id="PF07687">
    <property type="entry name" value="M20_dimer"/>
    <property type="match status" value="1"/>
</dbReference>
<dbReference type="Pfam" id="PF01546">
    <property type="entry name" value="Peptidase_M20"/>
    <property type="match status" value="1"/>
</dbReference>
<dbReference type="SUPFAM" id="SSF55031">
    <property type="entry name" value="Bacterial exopeptidase dimerisation domain"/>
    <property type="match status" value="1"/>
</dbReference>
<dbReference type="SUPFAM" id="SSF53187">
    <property type="entry name" value="Zn-dependent exopeptidases"/>
    <property type="match status" value="1"/>
</dbReference>
<dbReference type="PROSITE" id="PS00758">
    <property type="entry name" value="ARGE_DAPE_CPG2_1"/>
    <property type="match status" value="1"/>
</dbReference>
<dbReference type="PROSITE" id="PS00759">
    <property type="entry name" value="ARGE_DAPE_CPG2_2"/>
    <property type="match status" value="1"/>
</dbReference>
<protein>
    <recommendedName>
        <fullName evidence="1">Acetylornithine deacetylase</fullName>
        <shortName evidence="1">AO</shortName>
        <shortName evidence="1">Acetylornithinase</shortName>
        <ecNumber evidence="1">3.5.1.16</ecNumber>
    </recommendedName>
    <alternativeName>
        <fullName evidence="1">N-acetylornithinase</fullName>
        <shortName evidence="1">NAO</shortName>
    </alternativeName>
</protein>
<proteinExistence type="inferred from homology"/>
<gene>
    <name evidence="1" type="primary">argE</name>
    <name type="ordered locus">VS_2889</name>
</gene>
<organism>
    <name type="scientific">Vibrio atlanticus (strain LGP32)</name>
    <name type="common">Vibrio splendidus (strain Mel32)</name>
    <dbReference type="NCBI Taxonomy" id="575788"/>
    <lineage>
        <taxon>Bacteria</taxon>
        <taxon>Pseudomonadati</taxon>
        <taxon>Pseudomonadota</taxon>
        <taxon>Gammaproteobacteria</taxon>
        <taxon>Vibrionales</taxon>
        <taxon>Vibrionaceae</taxon>
        <taxon>Vibrio</taxon>
    </lineage>
</organism>